<dbReference type="EC" id="3.2.2.9" evidence="1"/>
<dbReference type="EMBL" id="CP000931">
    <property type="protein sequence ID" value="ABZ75620.1"/>
    <property type="molecule type" value="Genomic_DNA"/>
</dbReference>
<dbReference type="RefSeq" id="WP_012276167.1">
    <property type="nucleotide sequence ID" value="NC_010334.1"/>
</dbReference>
<dbReference type="SMR" id="B0TIS5"/>
<dbReference type="STRING" id="458817.Shal_1051"/>
<dbReference type="KEGG" id="shl:Shal_1051"/>
<dbReference type="eggNOG" id="COG0775">
    <property type="taxonomic scope" value="Bacteria"/>
</dbReference>
<dbReference type="HOGENOM" id="CLU_031248_2_2_6"/>
<dbReference type="OrthoDB" id="9792278at2"/>
<dbReference type="UniPathway" id="UPA00904">
    <property type="reaction ID" value="UER00871"/>
</dbReference>
<dbReference type="Proteomes" id="UP000001317">
    <property type="component" value="Chromosome"/>
</dbReference>
<dbReference type="GO" id="GO:0005829">
    <property type="term" value="C:cytosol"/>
    <property type="evidence" value="ECO:0007669"/>
    <property type="project" value="TreeGrafter"/>
</dbReference>
<dbReference type="GO" id="GO:0008782">
    <property type="term" value="F:adenosylhomocysteine nucleosidase activity"/>
    <property type="evidence" value="ECO:0007669"/>
    <property type="project" value="UniProtKB-UniRule"/>
</dbReference>
<dbReference type="GO" id="GO:0008930">
    <property type="term" value="F:methylthioadenosine nucleosidase activity"/>
    <property type="evidence" value="ECO:0007669"/>
    <property type="project" value="UniProtKB-UniRule"/>
</dbReference>
<dbReference type="GO" id="GO:0019509">
    <property type="term" value="P:L-methionine salvage from methylthioadenosine"/>
    <property type="evidence" value="ECO:0007669"/>
    <property type="project" value="UniProtKB-UniRule"/>
</dbReference>
<dbReference type="GO" id="GO:0019284">
    <property type="term" value="P:L-methionine salvage from S-adenosylmethionine"/>
    <property type="evidence" value="ECO:0007669"/>
    <property type="project" value="TreeGrafter"/>
</dbReference>
<dbReference type="GO" id="GO:0009164">
    <property type="term" value="P:nucleoside catabolic process"/>
    <property type="evidence" value="ECO:0007669"/>
    <property type="project" value="InterPro"/>
</dbReference>
<dbReference type="CDD" id="cd09008">
    <property type="entry name" value="MTAN"/>
    <property type="match status" value="1"/>
</dbReference>
<dbReference type="FunFam" id="3.40.50.1580:FF:000001">
    <property type="entry name" value="MTA/SAH nucleosidase family protein"/>
    <property type="match status" value="1"/>
</dbReference>
<dbReference type="Gene3D" id="3.40.50.1580">
    <property type="entry name" value="Nucleoside phosphorylase domain"/>
    <property type="match status" value="1"/>
</dbReference>
<dbReference type="HAMAP" id="MF_01684">
    <property type="entry name" value="Salvage_MtnN"/>
    <property type="match status" value="1"/>
</dbReference>
<dbReference type="InterPro" id="IPR010049">
    <property type="entry name" value="MTA_SAH_Nsdase"/>
</dbReference>
<dbReference type="InterPro" id="IPR000845">
    <property type="entry name" value="Nucleoside_phosphorylase_d"/>
</dbReference>
<dbReference type="InterPro" id="IPR035994">
    <property type="entry name" value="Nucleoside_phosphorylase_sf"/>
</dbReference>
<dbReference type="NCBIfam" id="TIGR01704">
    <property type="entry name" value="MTA_SAH-Nsdase"/>
    <property type="match status" value="1"/>
</dbReference>
<dbReference type="NCBIfam" id="NF004079">
    <property type="entry name" value="PRK05584.1"/>
    <property type="match status" value="1"/>
</dbReference>
<dbReference type="PANTHER" id="PTHR46832">
    <property type="entry name" value="5'-METHYLTHIOADENOSINE/S-ADENOSYLHOMOCYSTEINE NUCLEOSIDASE"/>
    <property type="match status" value="1"/>
</dbReference>
<dbReference type="PANTHER" id="PTHR46832:SF1">
    <property type="entry name" value="5'-METHYLTHIOADENOSINE_S-ADENOSYLHOMOCYSTEINE NUCLEOSIDASE"/>
    <property type="match status" value="1"/>
</dbReference>
<dbReference type="Pfam" id="PF01048">
    <property type="entry name" value="PNP_UDP_1"/>
    <property type="match status" value="1"/>
</dbReference>
<dbReference type="SUPFAM" id="SSF53167">
    <property type="entry name" value="Purine and uridine phosphorylases"/>
    <property type="match status" value="1"/>
</dbReference>
<gene>
    <name evidence="1" type="primary">mtnN</name>
    <name type="ordered locus">Shal_1051</name>
</gene>
<name>MTNN_SHEHH</name>
<reference key="1">
    <citation type="submission" date="2008-01" db="EMBL/GenBank/DDBJ databases">
        <title>Complete sequence of Shewanella halifaxensis HAW-EB4.</title>
        <authorList>
            <consortium name="US DOE Joint Genome Institute"/>
            <person name="Copeland A."/>
            <person name="Lucas S."/>
            <person name="Lapidus A."/>
            <person name="Glavina del Rio T."/>
            <person name="Dalin E."/>
            <person name="Tice H."/>
            <person name="Bruce D."/>
            <person name="Goodwin L."/>
            <person name="Pitluck S."/>
            <person name="Sims D."/>
            <person name="Brettin T."/>
            <person name="Detter J.C."/>
            <person name="Han C."/>
            <person name="Kuske C.R."/>
            <person name="Schmutz J."/>
            <person name="Larimer F."/>
            <person name="Land M."/>
            <person name="Hauser L."/>
            <person name="Kyrpides N."/>
            <person name="Kim E."/>
            <person name="Zhao J.-S."/>
            <person name="Richardson P."/>
        </authorList>
    </citation>
    <scope>NUCLEOTIDE SEQUENCE [LARGE SCALE GENOMIC DNA]</scope>
    <source>
        <strain>HAW-EB4</strain>
    </source>
</reference>
<comment type="function">
    <text evidence="1">Catalyzes the irreversible cleavage of the glycosidic bond in both 5'-methylthioadenosine (MTA) and S-adenosylhomocysteine (SAH/AdoHcy) to adenine and the corresponding thioribose, 5'-methylthioribose and S-ribosylhomocysteine, respectively. Also cleaves 5'-deoxyadenosine, a toxic by-product of radical S-adenosylmethionine (SAM) enzymes, into 5-deoxyribose and adenine.</text>
</comment>
<comment type="catalytic activity">
    <reaction evidence="1">
        <text>S-adenosyl-L-homocysteine + H2O = S-(5-deoxy-D-ribos-5-yl)-L-homocysteine + adenine</text>
        <dbReference type="Rhea" id="RHEA:17805"/>
        <dbReference type="ChEBI" id="CHEBI:15377"/>
        <dbReference type="ChEBI" id="CHEBI:16708"/>
        <dbReference type="ChEBI" id="CHEBI:57856"/>
        <dbReference type="ChEBI" id="CHEBI:58195"/>
        <dbReference type="EC" id="3.2.2.9"/>
    </reaction>
</comment>
<comment type="catalytic activity">
    <reaction evidence="1">
        <text>S-methyl-5'-thioadenosine + H2O = 5-(methylsulfanyl)-D-ribose + adenine</text>
        <dbReference type="Rhea" id="RHEA:13617"/>
        <dbReference type="ChEBI" id="CHEBI:15377"/>
        <dbReference type="ChEBI" id="CHEBI:16708"/>
        <dbReference type="ChEBI" id="CHEBI:17509"/>
        <dbReference type="ChEBI" id="CHEBI:78440"/>
        <dbReference type="EC" id="3.2.2.9"/>
    </reaction>
</comment>
<comment type="catalytic activity">
    <reaction evidence="1">
        <text>5'-deoxyadenosine + H2O = 5-deoxy-D-ribose + adenine</text>
        <dbReference type="Rhea" id="RHEA:29859"/>
        <dbReference type="ChEBI" id="CHEBI:15377"/>
        <dbReference type="ChEBI" id="CHEBI:16708"/>
        <dbReference type="ChEBI" id="CHEBI:17319"/>
        <dbReference type="ChEBI" id="CHEBI:149540"/>
        <dbReference type="EC" id="3.2.2.9"/>
    </reaction>
    <physiologicalReaction direction="left-to-right" evidence="1">
        <dbReference type="Rhea" id="RHEA:29860"/>
    </physiologicalReaction>
</comment>
<comment type="pathway">
    <text evidence="1">Amino-acid biosynthesis; L-methionine biosynthesis via salvage pathway; S-methyl-5-thio-alpha-D-ribose 1-phosphate from S-methyl-5'-thioadenosine (hydrolase route): step 1/2.</text>
</comment>
<comment type="similarity">
    <text evidence="1">Belongs to the PNP/UDP phosphorylase family. MtnN subfamily.</text>
</comment>
<protein>
    <recommendedName>
        <fullName evidence="1">5'-methylthioadenosine/S-adenosylhomocysteine nucleosidase</fullName>
        <shortName evidence="1">MTA/SAH nucleosidase</shortName>
        <shortName evidence="1">MTAN</shortName>
        <ecNumber evidence="1">3.2.2.9</ecNumber>
    </recommendedName>
    <alternativeName>
        <fullName evidence="1">5'-deoxyadenosine nucleosidase</fullName>
        <shortName evidence="1">DOA nucleosidase</shortName>
        <shortName evidence="1">dAdo nucleosidase</shortName>
    </alternativeName>
    <alternativeName>
        <fullName evidence="1">5'-methylthioadenosine nucleosidase</fullName>
        <shortName evidence="1">MTA nucleosidase</shortName>
    </alternativeName>
    <alternativeName>
        <fullName evidence="1">S-adenosylhomocysteine nucleosidase</fullName>
        <shortName evidence="1">AdoHcy nucleosidase</shortName>
        <shortName evidence="1">SAH nucleosidase</shortName>
        <shortName evidence="1">SRH nucleosidase</shortName>
    </alternativeName>
</protein>
<keyword id="KW-0028">Amino-acid biosynthesis</keyword>
<keyword id="KW-0378">Hydrolase</keyword>
<keyword id="KW-0486">Methionine biosynthesis</keyword>
<accession>B0TIS5</accession>
<evidence type="ECO:0000255" key="1">
    <source>
        <dbReference type="HAMAP-Rule" id="MF_01684"/>
    </source>
</evidence>
<sequence length="230" mass="24128">MKIGIIGAMEPEVAHLVESMENPSSTTIAGIEFVAGQLAGKDVIVTRSGIGKVTASIATTLLIEKYAPDVIINTGSAGGFADELAIGDIVISSEVRHHDVDVTAFGYEIGQMAQQPAAFIPDAKLVAAAQKAVASLGEVKAIEGLICTGDSFICDPVRTKTMLENFPTMAACEMEGAAIAQVCHQFGVPFVVIRSLSDNANNDSPVDFDEYIVKAGHHSALMVIALLKQL</sequence>
<feature type="chain" id="PRO_0000359345" description="5'-methylthioadenosine/S-adenosylhomocysteine nucleosidase">
    <location>
        <begin position="1"/>
        <end position="230"/>
    </location>
</feature>
<feature type="active site" description="Proton acceptor" evidence="1">
    <location>
        <position position="12"/>
    </location>
</feature>
<feature type="active site" description="Proton donor" evidence="1">
    <location>
        <position position="198"/>
    </location>
</feature>
<feature type="binding site" evidence="1">
    <location>
        <position position="78"/>
    </location>
    <ligand>
        <name>substrate</name>
    </ligand>
</feature>
<feature type="binding site" evidence="1">
    <location>
        <position position="153"/>
    </location>
    <ligand>
        <name>substrate</name>
    </ligand>
</feature>
<feature type="binding site" evidence="1">
    <location>
        <begin position="174"/>
        <end position="175"/>
    </location>
    <ligand>
        <name>substrate</name>
    </ligand>
</feature>
<organism>
    <name type="scientific">Shewanella halifaxensis (strain HAW-EB4)</name>
    <dbReference type="NCBI Taxonomy" id="458817"/>
    <lineage>
        <taxon>Bacteria</taxon>
        <taxon>Pseudomonadati</taxon>
        <taxon>Pseudomonadota</taxon>
        <taxon>Gammaproteobacteria</taxon>
        <taxon>Alteromonadales</taxon>
        <taxon>Shewanellaceae</taxon>
        <taxon>Shewanella</taxon>
    </lineage>
</organism>
<proteinExistence type="inferred from homology"/>